<dbReference type="EMBL" id="CP000817">
    <property type="protein sequence ID" value="ACA42071.1"/>
    <property type="molecule type" value="Genomic_DNA"/>
</dbReference>
<dbReference type="RefSeq" id="WP_010860613.1">
    <property type="nucleotide sequence ID" value="NC_010382.1"/>
</dbReference>
<dbReference type="SMR" id="B1HMZ3"/>
<dbReference type="EnsemblBacteria" id="ACA42071">
    <property type="protein sequence ID" value="ACA42071"/>
    <property type="gene ID" value="Bsph_4627"/>
</dbReference>
<dbReference type="GeneID" id="96596879"/>
<dbReference type="KEGG" id="lsp:Bsph_4627"/>
<dbReference type="HOGENOM" id="CLU_104295_1_2_9"/>
<dbReference type="Proteomes" id="UP000002164">
    <property type="component" value="Chromosome"/>
</dbReference>
<dbReference type="GO" id="GO:0015935">
    <property type="term" value="C:small ribosomal subunit"/>
    <property type="evidence" value="ECO:0007669"/>
    <property type="project" value="InterPro"/>
</dbReference>
<dbReference type="GO" id="GO:0019843">
    <property type="term" value="F:rRNA binding"/>
    <property type="evidence" value="ECO:0007669"/>
    <property type="project" value="UniProtKB-UniRule"/>
</dbReference>
<dbReference type="GO" id="GO:0003735">
    <property type="term" value="F:structural constituent of ribosome"/>
    <property type="evidence" value="ECO:0007669"/>
    <property type="project" value="InterPro"/>
</dbReference>
<dbReference type="GO" id="GO:0000049">
    <property type="term" value="F:tRNA binding"/>
    <property type="evidence" value="ECO:0007669"/>
    <property type="project" value="UniProtKB-UniRule"/>
</dbReference>
<dbReference type="GO" id="GO:0006412">
    <property type="term" value="P:translation"/>
    <property type="evidence" value="ECO:0007669"/>
    <property type="project" value="UniProtKB-UniRule"/>
</dbReference>
<dbReference type="CDD" id="cd03368">
    <property type="entry name" value="Ribosomal_S12"/>
    <property type="match status" value="1"/>
</dbReference>
<dbReference type="FunFam" id="2.40.50.140:FF:000001">
    <property type="entry name" value="30S ribosomal protein S12"/>
    <property type="match status" value="1"/>
</dbReference>
<dbReference type="Gene3D" id="2.40.50.140">
    <property type="entry name" value="Nucleic acid-binding proteins"/>
    <property type="match status" value="1"/>
</dbReference>
<dbReference type="HAMAP" id="MF_00403_B">
    <property type="entry name" value="Ribosomal_uS12_B"/>
    <property type="match status" value="1"/>
</dbReference>
<dbReference type="InterPro" id="IPR012340">
    <property type="entry name" value="NA-bd_OB-fold"/>
</dbReference>
<dbReference type="InterPro" id="IPR006032">
    <property type="entry name" value="Ribosomal_uS12"/>
</dbReference>
<dbReference type="InterPro" id="IPR005679">
    <property type="entry name" value="Ribosomal_uS12_bac"/>
</dbReference>
<dbReference type="NCBIfam" id="TIGR00981">
    <property type="entry name" value="rpsL_bact"/>
    <property type="match status" value="1"/>
</dbReference>
<dbReference type="PANTHER" id="PTHR11652">
    <property type="entry name" value="30S RIBOSOMAL PROTEIN S12 FAMILY MEMBER"/>
    <property type="match status" value="1"/>
</dbReference>
<dbReference type="Pfam" id="PF00164">
    <property type="entry name" value="Ribosom_S12_S23"/>
    <property type="match status" value="1"/>
</dbReference>
<dbReference type="PIRSF" id="PIRSF002133">
    <property type="entry name" value="Ribosomal_S12/S23"/>
    <property type="match status" value="1"/>
</dbReference>
<dbReference type="PRINTS" id="PR01034">
    <property type="entry name" value="RIBOSOMALS12"/>
</dbReference>
<dbReference type="SUPFAM" id="SSF50249">
    <property type="entry name" value="Nucleic acid-binding proteins"/>
    <property type="match status" value="1"/>
</dbReference>
<dbReference type="PROSITE" id="PS00055">
    <property type="entry name" value="RIBOSOMAL_S12"/>
    <property type="match status" value="1"/>
</dbReference>
<name>RS12_LYSSC</name>
<protein>
    <recommendedName>
        <fullName evidence="2">Small ribosomal subunit protein uS12</fullName>
    </recommendedName>
    <alternativeName>
        <fullName evidence="4">30S ribosomal protein S12</fullName>
    </alternativeName>
</protein>
<accession>B1HMZ3</accession>
<gene>
    <name evidence="2" type="primary">rpsL</name>
    <name type="ordered locus">Bsph_4627</name>
</gene>
<evidence type="ECO:0000250" key="1"/>
<evidence type="ECO:0000255" key="2">
    <source>
        <dbReference type="HAMAP-Rule" id="MF_00403"/>
    </source>
</evidence>
<evidence type="ECO:0000256" key="3">
    <source>
        <dbReference type="SAM" id="MobiDB-lite"/>
    </source>
</evidence>
<evidence type="ECO:0000305" key="4"/>
<proteinExistence type="inferred from homology"/>
<keyword id="KW-0488">Methylation</keyword>
<keyword id="KW-0687">Ribonucleoprotein</keyword>
<keyword id="KW-0689">Ribosomal protein</keyword>
<keyword id="KW-0694">RNA-binding</keyword>
<keyword id="KW-0699">rRNA-binding</keyword>
<keyword id="KW-0820">tRNA-binding</keyword>
<organism>
    <name type="scientific">Lysinibacillus sphaericus (strain C3-41)</name>
    <dbReference type="NCBI Taxonomy" id="444177"/>
    <lineage>
        <taxon>Bacteria</taxon>
        <taxon>Bacillati</taxon>
        <taxon>Bacillota</taxon>
        <taxon>Bacilli</taxon>
        <taxon>Bacillales</taxon>
        <taxon>Bacillaceae</taxon>
        <taxon>Lysinibacillus</taxon>
    </lineage>
</organism>
<comment type="function">
    <text evidence="2">With S4 and S5 plays an important role in translational accuracy.</text>
</comment>
<comment type="function">
    <text evidence="2">Interacts with and stabilizes bases of the 16S rRNA that are involved in tRNA selection in the A site and with the mRNA backbone. Located at the interface of the 30S and 50S subunits, it traverses the body of the 30S subunit contacting proteins on the other side and probably holding the rRNA structure together. The combined cluster of proteins S8, S12 and S17 appears to hold together the shoulder and platform of the 30S subunit.</text>
</comment>
<comment type="subunit">
    <text evidence="2">Part of the 30S ribosomal subunit. Contacts proteins S8 and S17. May interact with IF1 in the 30S initiation complex.</text>
</comment>
<comment type="similarity">
    <text evidence="2">Belongs to the universal ribosomal protein uS12 family.</text>
</comment>
<feature type="chain" id="PRO_1000194188" description="Small ribosomal subunit protein uS12">
    <location>
        <begin position="1"/>
        <end position="139"/>
    </location>
</feature>
<feature type="region of interest" description="Disordered" evidence="3">
    <location>
        <begin position="1"/>
        <end position="44"/>
    </location>
</feature>
<feature type="compositionally biased region" description="Basic residues" evidence="3">
    <location>
        <begin position="9"/>
        <end position="18"/>
    </location>
</feature>
<feature type="compositionally biased region" description="Polar residues" evidence="3">
    <location>
        <begin position="19"/>
        <end position="39"/>
    </location>
</feature>
<feature type="modified residue" description="3-methylthioaspartic acid" evidence="1">
    <location>
        <position position="102"/>
    </location>
</feature>
<reference key="1">
    <citation type="journal article" date="2008" name="J. Bacteriol.">
        <title>Complete genome sequence of the mosquitocidal bacterium Bacillus sphaericus C3-41 and comparison with those of closely related Bacillus species.</title>
        <authorList>
            <person name="Hu X."/>
            <person name="Fan W."/>
            <person name="Han B."/>
            <person name="Liu H."/>
            <person name="Zheng D."/>
            <person name="Li Q."/>
            <person name="Dong W."/>
            <person name="Yan J."/>
            <person name="Gao M."/>
            <person name="Berry C."/>
            <person name="Yuan Z."/>
        </authorList>
    </citation>
    <scope>NUCLEOTIDE SEQUENCE [LARGE SCALE GENOMIC DNA]</scope>
    <source>
        <strain>C3-41</strain>
    </source>
</reference>
<sequence length="139" mass="15550">MPTINQLVRKPRQSKITKSKSPALNKGYNSFKKSLTDVKSPQKRGVCTRVGTMTPRKPNSALRKYARVRLTNQIEVTAYIPGEGHNLQEHSVVLIRGGRVKDLAGVRYHIVRGALDTAGVNGRLQSRSKYGTKRPKEKK</sequence>